<accession>A1CQZ4</accession>
<protein>
    <recommendedName>
        <fullName>Protein sds23</fullName>
    </recommendedName>
</protein>
<name>SDS23_ASPCL</name>
<proteinExistence type="inferred from homology"/>
<comment type="function">
    <text evidence="1">Involved in DNA replication and cell separation.</text>
</comment>
<comment type="subcellular location">
    <subcellularLocation>
        <location evidence="1">Cytoplasm</location>
    </subcellularLocation>
    <subcellularLocation>
        <location evidence="1">Nucleus</location>
    </subcellularLocation>
</comment>
<comment type="similarity">
    <text evidence="4">Belongs to the SDS23 family.</text>
</comment>
<dbReference type="EMBL" id="DS027059">
    <property type="protein sequence ID" value="EAW08065.1"/>
    <property type="molecule type" value="Genomic_DNA"/>
</dbReference>
<dbReference type="RefSeq" id="XP_001269491.1">
    <property type="nucleotide sequence ID" value="XM_001269490.1"/>
</dbReference>
<dbReference type="SMR" id="A1CQZ4"/>
<dbReference type="STRING" id="344612.A1CQZ4"/>
<dbReference type="EnsemblFungi" id="EAW08065">
    <property type="protein sequence ID" value="EAW08065"/>
    <property type="gene ID" value="ACLA_027900"/>
</dbReference>
<dbReference type="GeneID" id="4702101"/>
<dbReference type="KEGG" id="act:ACLA_027900"/>
<dbReference type="VEuPathDB" id="FungiDB:ACLA_027900"/>
<dbReference type="eggNOG" id="KOG1764">
    <property type="taxonomic scope" value="Eukaryota"/>
</dbReference>
<dbReference type="HOGENOM" id="CLU_024459_0_0_1"/>
<dbReference type="OMA" id="DWTQISI"/>
<dbReference type="OrthoDB" id="449052at2759"/>
<dbReference type="Proteomes" id="UP000006701">
    <property type="component" value="Unassembled WGS sequence"/>
</dbReference>
<dbReference type="GO" id="GO:0005737">
    <property type="term" value="C:cytoplasm"/>
    <property type="evidence" value="ECO:0007669"/>
    <property type="project" value="UniProtKB-SubCell"/>
</dbReference>
<dbReference type="GO" id="GO:0005634">
    <property type="term" value="C:nucleus"/>
    <property type="evidence" value="ECO:0007669"/>
    <property type="project" value="UniProtKB-SubCell"/>
</dbReference>
<dbReference type="GO" id="GO:0004865">
    <property type="term" value="F:protein serine/threonine phosphatase inhibitor activity"/>
    <property type="evidence" value="ECO:0007669"/>
    <property type="project" value="TreeGrafter"/>
</dbReference>
<dbReference type="GO" id="GO:0042149">
    <property type="term" value="P:cellular response to glucose starvation"/>
    <property type="evidence" value="ECO:0007669"/>
    <property type="project" value="InterPro"/>
</dbReference>
<dbReference type="GO" id="GO:0030071">
    <property type="term" value="P:regulation of mitotic metaphase/anaphase transition"/>
    <property type="evidence" value="ECO:0007669"/>
    <property type="project" value="InterPro"/>
</dbReference>
<dbReference type="CDD" id="cd02205">
    <property type="entry name" value="CBS_pair_SF"/>
    <property type="match status" value="2"/>
</dbReference>
<dbReference type="Gene3D" id="3.10.580.10">
    <property type="entry name" value="CBS-domain"/>
    <property type="match status" value="2"/>
</dbReference>
<dbReference type="InterPro" id="IPR050511">
    <property type="entry name" value="AMPK_gamma/SDS23_families"/>
</dbReference>
<dbReference type="InterPro" id="IPR000644">
    <property type="entry name" value="CBS_dom"/>
</dbReference>
<dbReference type="InterPro" id="IPR046342">
    <property type="entry name" value="CBS_dom_sf"/>
</dbReference>
<dbReference type="InterPro" id="IPR016711">
    <property type="entry name" value="Ssd23"/>
</dbReference>
<dbReference type="PANTHER" id="PTHR13780">
    <property type="entry name" value="AMP-ACTIVATED PROTEIN KINASE, GAMMA REGULATORY SUBUNIT"/>
    <property type="match status" value="1"/>
</dbReference>
<dbReference type="PANTHER" id="PTHR13780:SF36">
    <property type="entry name" value="CBS DOMAIN-CONTAINING PROTEIN"/>
    <property type="match status" value="1"/>
</dbReference>
<dbReference type="Pfam" id="PF00571">
    <property type="entry name" value="CBS"/>
    <property type="match status" value="2"/>
</dbReference>
<dbReference type="PIRSF" id="PIRSF018148">
    <property type="entry name" value="UCP018148_CBS_YBR214w"/>
    <property type="match status" value="1"/>
</dbReference>
<dbReference type="SMART" id="SM00116">
    <property type="entry name" value="CBS"/>
    <property type="match status" value="3"/>
</dbReference>
<dbReference type="SUPFAM" id="SSF54631">
    <property type="entry name" value="CBS-domain pair"/>
    <property type="match status" value="2"/>
</dbReference>
<dbReference type="PROSITE" id="PS51371">
    <property type="entry name" value="CBS"/>
    <property type="match status" value="3"/>
</dbReference>
<evidence type="ECO:0000250" key="1"/>
<evidence type="ECO:0000255" key="2">
    <source>
        <dbReference type="PROSITE-ProRule" id="PRU00703"/>
    </source>
</evidence>
<evidence type="ECO:0000256" key="3">
    <source>
        <dbReference type="SAM" id="MobiDB-lite"/>
    </source>
</evidence>
<evidence type="ECO:0000305" key="4"/>
<gene>
    <name type="primary">sds23</name>
    <name type="ORF">ACLA_027900</name>
</gene>
<sequence>MADQQNVEAITDHSNGSAIASPRSSTDSRSPSTRSQSLRLSHSNHQHRQSFSDSLRAAPGSPRARRQPSLTQAAIQSLIDNPPAPRDVNPAFAGRDWREITIGELVSPDDLKFVEVDTGIEEATNMLIDTNAPVLLIRETPQQKTVVGTFDYSDLNAYLLLAAGLTQPTEELRAPYEQLARKAREGHKIPLQDVKALGRNEPLTTLPASASLMAAVETFGGGVHRVIVVDERKDGEVVGIFSQFRLVKFLWENGRSFPVIDQLYPQYLRDLGIGSREVVSINGDKRLCEVLQLMNSEGISSVAVVDNHANVVGNISTTDVKLLTRSSSLPLLHNSCIHFISVILSARGLVEGKDSFPVFYVNPGSTLAHTVAKLVATKSHRLWVTDPLSPSSSGPPTPSHSSGQLPLAANPIQSPPLSPPPTSAGIPSPNYTTPHLPSPPVGIPHVVAPSIPASALPGARLSGRLVGVVSLTDILNLHARASGLRPADPAENRSRRRRSSSSSVSVRKSGDIGRELFSRRE</sequence>
<reference key="1">
    <citation type="journal article" date="2008" name="PLoS Genet.">
        <title>Genomic islands in the pathogenic filamentous fungus Aspergillus fumigatus.</title>
        <authorList>
            <person name="Fedorova N.D."/>
            <person name="Khaldi N."/>
            <person name="Joardar V.S."/>
            <person name="Maiti R."/>
            <person name="Amedeo P."/>
            <person name="Anderson M.J."/>
            <person name="Crabtree J."/>
            <person name="Silva J.C."/>
            <person name="Badger J.H."/>
            <person name="Albarraq A."/>
            <person name="Angiuoli S."/>
            <person name="Bussey H."/>
            <person name="Bowyer P."/>
            <person name="Cotty P.J."/>
            <person name="Dyer P.S."/>
            <person name="Egan A."/>
            <person name="Galens K."/>
            <person name="Fraser-Liggett C.M."/>
            <person name="Haas B.J."/>
            <person name="Inman J.M."/>
            <person name="Kent R."/>
            <person name="Lemieux S."/>
            <person name="Malavazi I."/>
            <person name="Orvis J."/>
            <person name="Roemer T."/>
            <person name="Ronning C.M."/>
            <person name="Sundaram J.P."/>
            <person name="Sutton G."/>
            <person name="Turner G."/>
            <person name="Venter J.C."/>
            <person name="White O.R."/>
            <person name="Whitty B.R."/>
            <person name="Youngman P."/>
            <person name="Wolfe K.H."/>
            <person name="Goldman G.H."/>
            <person name="Wortman J.R."/>
            <person name="Jiang B."/>
            <person name="Denning D.W."/>
            <person name="Nierman W.C."/>
        </authorList>
    </citation>
    <scope>NUCLEOTIDE SEQUENCE [LARGE SCALE GENOMIC DNA]</scope>
    <source>
        <strain>ATCC 1007 / CBS 513.65 / DSM 816 / NCTC 3887 / NRRL 1 / QM 1276 / 107</strain>
    </source>
</reference>
<organism>
    <name type="scientific">Aspergillus clavatus (strain ATCC 1007 / CBS 513.65 / DSM 816 / NCTC 3887 / NRRL 1 / QM 1276 / 107)</name>
    <dbReference type="NCBI Taxonomy" id="344612"/>
    <lineage>
        <taxon>Eukaryota</taxon>
        <taxon>Fungi</taxon>
        <taxon>Dikarya</taxon>
        <taxon>Ascomycota</taxon>
        <taxon>Pezizomycotina</taxon>
        <taxon>Eurotiomycetes</taxon>
        <taxon>Eurotiomycetidae</taxon>
        <taxon>Eurotiales</taxon>
        <taxon>Aspergillaceae</taxon>
        <taxon>Aspergillus</taxon>
        <taxon>Aspergillus subgen. Fumigati</taxon>
    </lineage>
</organism>
<keyword id="KW-0129">CBS domain</keyword>
<keyword id="KW-0963">Cytoplasm</keyword>
<keyword id="KW-0539">Nucleus</keyword>
<keyword id="KW-1185">Reference proteome</keyword>
<keyword id="KW-0677">Repeat</keyword>
<feature type="chain" id="PRO_0000324946" description="Protein sds23">
    <location>
        <begin position="1"/>
        <end position="521"/>
    </location>
</feature>
<feature type="domain" description="CBS 1" evidence="2">
    <location>
        <begin position="106"/>
        <end position="171"/>
    </location>
</feature>
<feature type="domain" description="CBS 2" evidence="2">
    <location>
        <begin position="199"/>
        <end position="256"/>
    </location>
</feature>
<feature type="domain" description="CBS 3" evidence="2">
    <location>
        <begin position="274"/>
        <end position="331"/>
    </location>
</feature>
<feature type="domain" description="CBS 4" evidence="2">
    <location>
        <begin position="335"/>
        <end position="391"/>
    </location>
</feature>
<feature type="region of interest" description="Disordered" evidence="3">
    <location>
        <begin position="1"/>
        <end position="70"/>
    </location>
</feature>
<feature type="region of interest" description="Disordered" evidence="3">
    <location>
        <begin position="386"/>
        <end position="437"/>
    </location>
</feature>
<feature type="region of interest" description="Disordered" evidence="3">
    <location>
        <begin position="484"/>
        <end position="521"/>
    </location>
</feature>
<feature type="compositionally biased region" description="Polar residues" evidence="3">
    <location>
        <begin position="1"/>
        <end position="18"/>
    </location>
</feature>
<feature type="compositionally biased region" description="Low complexity" evidence="3">
    <location>
        <begin position="21"/>
        <end position="41"/>
    </location>
</feature>
<feature type="compositionally biased region" description="Pro residues" evidence="3">
    <location>
        <begin position="413"/>
        <end position="422"/>
    </location>
</feature>
<feature type="compositionally biased region" description="Basic and acidic residues" evidence="3">
    <location>
        <begin position="508"/>
        <end position="521"/>
    </location>
</feature>